<protein>
    <recommendedName>
        <fullName evidence="1">Bifunctional protein FolD</fullName>
    </recommendedName>
    <domain>
        <recommendedName>
            <fullName evidence="1">Methylenetetrahydrofolate dehydrogenase</fullName>
            <ecNumber evidence="1">1.5.1.5</ecNumber>
        </recommendedName>
    </domain>
    <domain>
        <recommendedName>
            <fullName evidence="1">Methenyltetrahydrofolate cyclohydrolase</fullName>
            <ecNumber evidence="1">3.5.4.9</ecNumber>
        </recommendedName>
    </domain>
</protein>
<sequence>MTATIIDGKIIATELRARVAVEVARLKKDHSLTPGLAVVLVGNDPASEVYVRNKGIATTEAGMNSFEFKLPAETSEADVLAKVRELNADPAVHGFLVQFPVPNHISQQAVIDAIDPVKDADGLHPLNAGRLASGLPAMVPATPEGCVIMAKRAGGDLSGKHAVIIGRSNLVGKPVAQLLLKENCTVTIAHSRSRDLPSIARQADILVAAVGRPGMVRGDWVKPGAVVIDVGINRVPAPEKGEGKTRLVGDVLFDEAAEVAGAITPVPGGVGLMTVACLLRNTVIAACRQNGIALPQDF</sequence>
<gene>
    <name evidence="1" type="primary">folD</name>
    <name type="ordered locus">Plav_1372</name>
</gene>
<feature type="chain" id="PRO_1000073610" description="Bifunctional protein FolD">
    <location>
        <begin position="1"/>
        <end position="298"/>
    </location>
</feature>
<feature type="binding site" evidence="1">
    <location>
        <begin position="166"/>
        <end position="168"/>
    </location>
    <ligand>
        <name>NADP(+)</name>
        <dbReference type="ChEBI" id="CHEBI:58349"/>
    </ligand>
</feature>
<feature type="binding site" evidence="1">
    <location>
        <position position="191"/>
    </location>
    <ligand>
        <name>NADP(+)</name>
        <dbReference type="ChEBI" id="CHEBI:58349"/>
    </ligand>
</feature>
<feature type="binding site" evidence="1">
    <location>
        <position position="232"/>
    </location>
    <ligand>
        <name>NADP(+)</name>
        <dbReference type="ChEBI" id="CHEBI:58349"/>
    </ligand>
</feature>
<evidence type="ECO:0000255" key="1">
    <source>
        <dbReference type="HAMAP-Rule" id="MF_01576"/>
    </source>
</evidence>
<keyword id="KW-0028">Amino-acid biosynthesis</keyword>
<keyword id="KW-0368">Histidine biosynthesis</keyword>
<keyword id="KW-0378">Hydrolase</keyword>
<keyword id="KW-0486">Methionine biosynthesis</keyword>
<keyword id="KW-0511">Multifunctional enzyme</keyword>
<keyword id="KW-0521">NADP</keyword>
<keyword id="KW-0554">One-carbon metabolism</keyword>
<keyword id="KW-0560">Oxidoreductase</keyword>
<keyword id="KW-0658">Purine biosynthesis</keyword>
<keyword id="KW-1185">Reference proteome</keyword>
<proteinExistence type="inferred from homology"/>
<comment type="function">
    <text evidence="1">Catalyzes the oxidation of 5,10-methylenetetrahydrofolate to 5,10-methenyltetrahydrofolate and then the hydrolysis of 5,10-methenyltetrahydrofolate to 10-formyltetrahydrofolate.</text>
</comment>
<comment type="catalytic activity">
    <reaction evidence="1">
        <text>(6R)-5,10-methylene-5,6,7,8-tetrahydrofolate + NADP(+) = (6R)-5,10-methenyltetrahydrofolate + NADPH</text>
        <dbReference type="Rhea" id="RHEA:22812"/>
        <dbReference type="ChEBI" id="CHEBI:15636"/>
        <dbReference type="ChEBI" id="CHEBI:57455"/>
        <dbReference type="ChEBI" id="CHEBI:57783"/>
        <dbReference type="ChEBI" id="CHEBI:58349"/>
        <dbReference type="EC" id="1.5.1.5"/>
    </reaction>
</comment>
<comment type="catalytic activity">
    <reaction evidence="1">
        <text>(6R)-5,10-methenyltetrahydrofolate + H2O = (6R)-10-formyltetrahydrofolate + H(+)</text>
        <dbReference type="Rhea" id="RHEA:23700"/>
        <dbReference type="ChEBI" id="CHEBI:15377"/>
        <dbReference type="ChEBI" id="CHEBI:15378"/>
        <dbReference type="ChEBI" id="CHEBI:57455"/>
        <dbReference type="ChEBI" id="CHEBI:195366"/>
        <dbReference type="EC" id="3.5.4.9"/>
    </reaction>
</comment>
<comment type="pathway">
    <text evidence="1">One-carbon metabolism; tetrahydrofolate interconversion.</text>
</comment>
<comment type="subunit">
    <text evidence="1">Homodimer.</text>
</comment>
<comment type="similarity">
    <text evidence="1">Belongs to the tetrahydrofolate dehydrogenase/cyclohydrolase family.</text>
</comment>
<name>FOLD_PARL1</name>
<dbReference type="EC" id="1.5.1.5" evidence="1"/>
<dbReference type="EC" id="3.5.4.9" evidence="1"/>
<dbReference type="EMBL" id="CP000774">
    <property type="protein sequence ID" value="ABS62992.1"/>
    <property type="molecule type" value="Genomic_DNA"/>
</dbReference>
<dbReference type="RefSeq" id="WP_012110267.1">
    <property type="nucleotide sequence ID" value="NC_009719.1"/>
</dbReference>
<dbReference type="SMR" id="A7HSV9"/>
<dbReference type="STRING" id="402881.Plav_1372"/>
<dbReference type="KEGG" id="pla:Plav_1372"/>
<dbReference type="eggNOG" id="COG0190">
    <property type="taxonomic scope" value="Bacteria"/>
</dbReference>
<dbReference type="HOGENOM" id="CLU_034045_2_1_5"/>
<dbReference type="OrthoDB" id="9803580at2"/>
<dbReference type="UniPathway" id="UPA00193"/>
<dbReference type="Proteomes" id="UP000006377">
    <property type="component" value="Chromosome"/>
</dbReference>
<dbReference type="GO" id="GO:0005829">
    <property type="term" value="C:cytosol"/>
    <property type="evidence" value="ECO:0007669"/>
    <property type="project" value="TreeGrafter"/>
</dbReference>
<dbReference type="GO" id="GO:0004477">
    <property type="term" value="F:methenyltetrahydrofolate cyclohydrolase activity"/>
    <property type="evidence" value="ECO:0007669"/>
    <property type="project" value="UniProtKB-UniRule"/>
</dbReference>
<dbReference type="GO" id="GO:0004488">
    <property type="term" value="F:methylenetetrahydrofolate dehydrogenase (NADP+) activity"/>
    <property type="evidence" value="ECO:0007669"/>
    <property type="project" value="UniProtKB-UniRule"/>
</dbReference>
<dbReference type="GO" id="GO:0000105">
    <property type="term" value="P:L-histidine biosynthetic process"/>
    <property type="evidence" value="ECO:0007669"/>
    <property type="project" value="UniProtKB-KW"/>
</dbReference>
<dbReference type="GO" id="GO:0009086">
    <property type="term" value="P:methionine biosynthetic process"/>
    <property type="evidence" value="ECO:0007669"/>
    <property type="project" value="UniProtKB-KW"/>
</dbReference>
<dbReference type="GO" id="GO:0006164">
    <property type="term" value="P:purine nucleotide biosynthetic process"/>
    <property type="evidence" value="ECO:0007669"/>
    <property type="project" value="UniProtKB-KW"/>
</dbReference>
<dbReference type="GO" id="GO:0035999">
    <property type="term" value="P:tetrahydrofolate interconversion"/>
    <property type="evidence" value="ECO:0007669"/>
    <property type="project" value="UniProtKB-UniRule"/>
</dbReference>
<dbReference type="CDD" id="cd01080">
    <property type="entry name" value="NAD_bind_m-THF_DH_Cyclohyd"/>
    <property type="match status" value="1"/>
</dbReference>
<dbReference type="FunFam" id="3.40.50.720:FF:000006">
    <property type="entry name" value="Bifunctional protein FolD"/>
    <property type="match status" value="1"/>
</dbReference>
<dbReference type="FunFam" id="3.40.50.10860:FF:000005">
    <property type="entry name" value="C-1-tetrahydrofolate synthase, cytoplasmic, putative"/>
    <property type="match status" value="1"/>
</dbReference>
<dbReference type="Gene3D" id="3.40.50.10860">
    <property type="entry name" value="Leucine Dehydrogenase, chain A, domain 1"/>
    <property type="match status" value="1"/>
</dbReference>
<dbReference type="Gene3D" id="3.40.50.720">
    <property type="entry name" value="NAD(P)-binding Rossmann-like Domain"/>
    <property type="match status" value="1"/>
</dbReference>
<dbReference type="HAMAP" id="MF_01576">
    <property type="entry name" value="THF_DHG_CYH"/>
    <property type="match status" value="1"/>
</dbReference>
<dbReference type="InterPro" id="IPR046346">
    <property type="entry name" value="Aminoacid_DH-like_N_sf"/>
</dbReference>
<dbReference type="InterPro" id="IPR036291">
    <property type="entry name" value="NAD(P)-bd_dom_sf"/>
</dbReference>
<dbReference type="InterPro" id="IPR000672">
    <property type="entry name" value="THF_DH/CycHdrlase"/>
</dbReference>
<dbReference type="InterPro" id="IPR020630">
    <property type="entry name" value="THF_DH/CycHdrlase_cat_dom"/>
</dbReference>
<dbReference type="InterPro" id="IPR020631">
    <property type="entry name" value="THF_DH/CycHdrlase_NAD-bd_dom"/>
</dbReference>
<dbReference type="NCBIfam" id="NF010783">
    <property type="entry name" value="PRK14186.1"/>
    <property type="match status" value="1"/>
</dbReference>
<dbReference type="NCBIfam" id="NF010785">
    <property type="entry name" value="PRK14188.1"/>
    <property type="match status" value="1"/>
</dbReference>
<dbReference type="PANTHER" id="PTHR48099:SF5">
    <property type="entry name" value="C-1-TETRAHYDROFOLATE SYNTHASE, CYTOPLASMIC"/>
    <property type="match status" value="1"/>
</dbReference>
<dbReference type="PANTHER" id="PTHR48099">
    <property type="entry name" value="C-1-TETRAHYDROFOLATE SYNTHASE, CYTOPLASMIC-RELATED"/>
    <property type="match status" value="1"/>
</dbReference>
<dbReference type="Pfam" id="PF00763">
    <property type="entry name" value="THF_DHG_CYH"/>
    <property type="match status" value="1"/>
</dbReference>
<dbReference type="Pfam" id="PF02882">
    <property type="entry name" value="THF_DHG_CYH_C"/>
    <property type="match status" value="1"/>
</dbReference>
<dbReference type="PRINTS" id="PR00085">
    <property type="entry name" value="THFDHDRGNASE"/>
</dbReference>
<dbReference type="SUPFAM" id="SSF53223">
    <property type="entry name" value="Aminoacid dehydrogenase-like, N-terminal domain"/>
    <property type="match status" value="1"/>
</dbReference>
<dbReference type="SUPFAM" id="SSF51735">
    <property type="entry name" value="NAD(P)-binding Rossmann-fold domains"/>
    <property type="match status" value="1"/>
</dbReference>
<reference key="1">
    <citation type="journal article" date="2011" name="Stand. Genomic Sci.">
        <title>Complete genome sequence of Parvibaculum lavamentivorans type strain (DS-1(T)).</title>
        <authorList>
            <person name="Schleheck D."/>
            <person name="Weiss M."/>
            <person name="Pitluck S."/>
            <person name="Bruce D."/>
            <person name="Land M.L."/>
            <person name="Han S."/>
            <person name="Saunders E."/>
            <person name="Tapia R."/>
            <person name="Detter C."/>
            <person name="Brettin T."/>
            <person name="Han J."/>
            <person name="Woyke T."/>
            <person name="Goodwin L."/>
            <person name="Pennacchio L."/>
            <person name="Nolan M."/>
            <person name="Cook A.M."/>
            <person name="Kjelleberg S."/>
            <person name="Thomas T."/>
        </authorList>
    </citation>
    <scope>NUCLEOTIDE SEQUENCE [LARGE SCALE GENOMIC DNA]</scope>
    <source>
        <strain>DS-1 / DSM 13023 / NCIMB 13966</strain>
    </source>
</reference>
<organism>
    <name type="scientific">Parvibaculum lavamentivorans (strain DS-1 / DSM 13023 / NCIMB 13966)</name>
    <dbReference type="NCBI Taxonomy" id="402881"/>
    <lineage>
        <taxon>Bacteria</taxon>
        <taxon>Pseudomonadati</taxon>
        <taxon>Pseudomonadota</taxon>
        <taxon>Alphaproteobacteria</taxon>
        <taxon>Hyphomicrobiales</taxon>
        <taxon>Parvibaculaceae</taxon>
        <taxon>Parvibaculum</taxon>
    </lineage>
</organism>
<accession>A7HSV9</accession>